<sequence length="258" mass="28795">MASDDSVPQHSVEKTTEYESSDRGLFDFMKKEEKDETKVIATEFEEKVQVSEPEPKYEDCKVVEEEEEKAAKPSLLEKLHRSGSSSSSSSSDEEVEEGGEKKKKKEKKGLKEKIEEKIHHKEEDTSVPVEVVTEPEKKKGFMEKIKEKLPGGGKKVEEETVAPPPPPAAAPVDCAVEGDPAKKGILEKIKEKIPGYHPKTSTEEEKKDNDCASAKLIIRCLDRMFDYYYYASFSCGVGLILCFDPLLWGPLISFGTSG</sequence>
<reference evidence="5" key="1">
    <citation type="journal article" date="2000" name="Plant Biotechnol.">
        <title>Cloning and characterization of ECPP44, a cDNA encoding a 44-kilodalton phosphoprotein relating to somatic embryogenesis in carrot.</title>
        <authorList>
            <person name="Tan S.-K."/>
            <person name="Sage-Ono K."/>
            <person name="Kamada H."/>
        </authorList>
    </citation>
    <scope>NUCLEOTIDE SEQUENCE [MRNA]</scope>
    <source>
        <strain evidence="2">cv. US-Harumakigosun</strain>
        <tissue evidence="2">Embryo</tissue>
    </source>
</reference>
<reference evidence="5" key="2">
    <citation type="journal article" date="2000" name="Plant Cell Rep.">
        <title>Initial identification of a phosphoprotein that appears to be involved in the induction of somatic embryogenesis in carrot.</title>
        <authorList>
            <person name="Tan S.-K."/>
            <person name="Kamada H."/>
        </authorList>
    </citation>
    <scope>NUCLEOTIDE SEQUENCE [MRNA] OF 59-179</scope>
    <scope>PROTEIN SEQUENCE OF 59-79; 98-117 AND 161-179</scope>
    <scope>INDUCTION</scope>
    <scope>PHOSPHORYLATION</scope>
    <source>
        <strain evidence="3">cv. US-Harumakigosun</strain>
        <tissue evidence="3">Embryo</tissue>
    </source>
</reference>
<accession>Q9XJ56</accession>
<gene>
    <name type="primary">ECPP44</name>
</gene>
<dbReference type="EMBL" id="AB010898">
    <property type="protein sequence ID" value="BAA82445.1"/>
    <property type="molecule type" value="mRNA"/>
</dbReference>
<dbReference type="SMR" id="Q9XJ56"/>
<dbReference type="GO" id="GO:0005829">
    <property type="term" value="C:cytosol"/>
    <property type="evidence" value="ECO:0007669"/>
    <property type="project" value="TreeGrafter"/>
</dbReference>
<dbReference type="GO" id="GO:0016020">
    <property type="term" value="C:membrane"/>
    <property type="evidence" value="ECO:0007669"/>
    <property type="project" value="TreeGrafter"/>
</dbReference>
<dbReference type="GO" id="GO:0009631">
    <property type="term" value="P:cold acclimation"/>
    <property type="evidence" value="ECO:0007669"/>
    <property type="project" value="TreeGrafter"/>
</dbReference>
<dbReference type="GO" id="GO:0009737">
    <property type="term" value="P:response to abscisic acid"/>
    <property type="evidence" value="ECO:0007669"/>
    <property type="project" value="TreeGrafter"/>
</dbReference>
<dbReference type="GO" id="GO:0009414">
    <property type="term" value="P:response to water deprivation"/>
    <property type="evidence" value="ECO:0007669"/>
    <property type="project" value="TreeGrafter"/>
</dbReference>
<dbReference type="InterPro" id="IPR000167">
    <property type="entry name" value="Dehydrin"/>
</dbReference>
<dbReference type="InterPro" id="IPR030513">
    <property type="entry name" value="Dehydrin_CS"/>
</dbReference>
<dbReference type="PANTHER" id="PTHR33346:SF2">
    <property type="entry name" value="DEHYDRIN ERD14"/>
    <property type="match status" value="1"/>
</dbReference>
<dbReference type="PANTHER" id="PTHR33346">
    <property type="entry name" value="DEHYDRIN XERO 2-RELATED"/>
    <property type="match status" value="1"/>
</dbReference>
<dbReference type="Pfam" id="PF00257">
    <property type="entry name" value="Dehydrin"/>
    <property type="match status" value="1"/>
</dbReference>
<dbReference type="PROSITE" id="PS00315">
    <property type="entry name" value="DEHYDRIN_1"/>
    <property type="match status" value="1"/>
</dbReference>
<dbReference type="PROSITE" id="PS00823">
    <property type="entry name" value="DEHYDRIN_2"/>
    <property type="match status" value="2"/>
</dbReference>
<protein>
    <recommendedName>
        <fullName>Phosphoprotein ECPP44</fullName>
    </recommendedName>
</protein>
<proteinExistence type="evidence at protein level"/>
<name>ECP44_DAUCA</name>
<keyword id="KW-0903">Direct protein sequencing</keyword>
<keyword id="KW-0597">Phosphoprotein</keyword>
<keyword id="KW-0346">Stress response</keyword>
<feature type="chain" id="PRO_0000100044" description="Phosphoprotein ECPP44">
    <location>
        <begin position="1"/>
        <end position="258"/>
    </location>
</feature>
<feature type="region of interest" description="Disordered" evidence="1">
    <location>
        <begin position="1"/>
        <end position="25"/>
    </location>
</feature>
<feature type="region of interest" description="Disordered" evidence="1">
    <location>
        <begin position="46"/>
        <end position="131"/>
    </location>
</feature>
<feature type="region of interest" description="Disordered" evidence="1">
    <location>
        <begin position="148"/>
        <end position="175"/>
    </location>
</feature>
<feature type="compositionally biased region" description="Basic and acidic residues" evidence="1">
    <location>
        <begin position="11"/>
        <end position="25"/>
    </location>
</feature>
<feature type="compositionally biased region" description="Basic and acidic residues" evidence="1">
    <location>
        <begin position="46"/>
        <end position="80"/>
    </location>
</feature>
<feature type="compositionally biased region" description="Basic and acidic residues" evidence="1">
    <location>
        <begin position="109"/>
        <end position="124"/>
    </location>
</feature>
<feature type="compositionally biased region" description="Basic and acidic residues" evidence="1">
    <location>
        <begin position="148"/>
        <end position="158"/>
    </location>
</feature>
<organism evidence="6">
    <name type="scientific">Daucus carota</name>
    <name type="common">Wild carrot</name>
    <dbReference type="NCBI Taxonomy" id="4039"/>
    <lineage>
        <taxon>Eukaryota</taxon>
        <taxon>Viridiplantae</taxon>
        <taxon>Streptophyta</taxon>
        <taxon>Embryophyta</taxon>
        <taxon>Tracheophyta</taxon>
        <taxon>Spermatophyta</taxon>
        <taxon>Magnoliopsida</taxon>
        <taxon>eudicotyledons</taxon>
        <taxon>Gunneridae</taxon>
        <taxon>Pentapetalae</taxon>
        <taxon>asterids</taxon>
        <taxon>campanulids</taxon>
        <taxon>Apiales</taxon>
        <taxon>Apiaceae</taxon>
        <taxon>Apioideae</taxon>
        <taxon>Scandiceae</taxon>
        <taxon>Daucinae</taxon>
        <taxon>Daucus</taxon>
        <taxon>Daucus sect. Daucus</taxon>
    </lineage>
</organism>
<evidence type="ECO:0000256" key="1">
    <source>
        <dbReference type="SAM" id="MobiDB-lite"/>
    </source>
</evidence>
<evidence type="ECO:0000269" key="2">
    <source ref="1"/>
</evidence>
<evidence type="ECO:0000269" key="3">
    <source ref="2"/>
</evidence>
<evidence type="ECO:0000303" key="4">
    <source ref="2"/>
</evidence>
<evidence type="ECO:0000305" key="5"/>
<evidence type="ECO:0000312" key="6">
    <source>
        <dbReference type="EMBL" id="BAA82445.1"/>
    </source>
</evidence>
<comment type="function">
    <text evidence="4">Phosphorylation of ECCP44 protein is thought to be involved in the acquisition of embryogenic competence. Unlike other dehydrins, it is not thought to function as an environmental stress tolerant.</text>
</comment>
<comment type="induction">
    <text evidence="3">By stress compounds such as sucrose, sodium chloride, calcium chloride and abscisic acid in shoot apices.</text>
</comment>
<comment type="PTM">
    <text evidence="3">Phosphorylated in embryogenic and somatic embryos. Not phosphorylated in non-embryogenic cells.</text>
</comment>
<comment type="similarity">
    <text evidence="5">Belongs to the plant dehydrin family.</text>
</comment>